<dbReference type="EMBL" id="CP000312">
    <property type="protein sequence ID" value="ABG86887.1"/>
    <property type="molecule type" value="Genomic_DNA"/>
</dbReference>
<dbReference type="RefSeq" id="WP_003454406.1">
    <property type="nucleotide sequence ID" value="NZ_CAXVKH010000004.1"/>
</dbReference>
<dbReference type="SMR" id="Q0SQF0"/>
<dbReference type="GeneID" id="93001015"/>
<dbReference type="KEGG" id="cpr:CPR_2393"/>
<dbReference type="Proteomes" id="UP000001824">
    <property type="component" value="Chromosome"/>
</dbReference>
<dbReference type="GO" id="GO:0022627">
    <property type="term" value="C:cytosolic small ribosomal subunit"/>
    <property type="evidence" value="ECO:0007669"/>
    <property type="project" value="TreeGrafter"/>
</dbReference>
<dbReference type="GO" id="GO:0003729">
    <property type="term" value="F:mRNA binding"/>
    <property type="evidence" value="ECO:0007669"/>
    <property type="project" value="UniProtKB-UniRule"/>
</dbReference>
<dbReference type="GO" id="GO:0019843">
    <property type="term" value="F:rRNA binding"/>
    <property type="evidence" value="ECO:0007669"/>
    <property type="project" value="UniProtKB-UniRule"/>
</dbReference>
<dbReference type="GO" id="GO:0003735">
    <property type="term" value="F:structural constituent of ribosome"/>
    <property type="evidence" value="ECO:0007669"/>
    <property type="project" value="InterPro"/>
</dbReference>
<dbReference type="GO" id="GO:0006412">
    <property type="term" value="P:translation"/>
    <property type="evidence" value="ECO:0007669"/>
    <property type="project" value="UniProtKB-UniRule"/>
</dbReference>
<dbReference type="CDD" id="cd02412">
    <property type="entry name" value="KH-II_30S_S3"/>
    <property type="match status" value="1"/>
</dbReference>
<dbReference type="FunFam" id="3.30.300.20:FF:000001">
    <property type="entry name" value="30S ribosomal protein S3"/>
    <property type="match status" value="1"/>
</dbReference>
<dbReference type="Gene3D" id="3.30.300.20">
    <property type="match status" value="1"/>
</dbReference>
<dbReference type="Gene3D" id="3.30.1140.32">
    <property type="entry name" value="Ribosomal protein S3, C-terminal domain"/>
    <property type="match status" value="1"/>
</dbReference>
<dbReference type="HAMAP" id="MF_01309_B">
    <property type="entry name" value="Ribosomal_uS3_B"/>
    <property type="match status" value="1"/>
</dbReference>
<dbReference type="InterPro" id="IPR004087">
    <property type="entry name" value="KH_dom"/>
</dbReference>
<dbReference type="InterPro" id="IPR015946">
    <property type="entry name" value="KH_dom-like_a/b"/>
</dbReference>
<dbReference type="InterPro" id="IPR004044">
    <property type="entry name" value="KH_dom_type_2"/>
</dbReference>
<dbReference type="InterPro" id="IPR009019">
    <property type="entry name" value="KH_sf_prok-type"/>
</dbReference>
<dbReference type="InterPro" id="IPR036419">
    <property type="entry name" value="Ribosomal_S3_C_sf"/>
</dbReference>
<dbReference type="InterPro" id="IPR005704">
    <property type="entry name" value="Ribosomal_uS3_bac-typ"/>
</dbReference>
<dbReference type="InterPro" id="IPR001351">
    <property type="entry name" value="Ribosomal_uS3_C"/>
</dbReference>
<dbReference type="InterPro" id="IPR018280">
    <property type="entry name" value="Ribosomal_uS3_CS"/>
</dbReference>
<dbReference type="NCBIfam" id="TIGR01009">
    <property type="entry name" value="rpsC_bact"/>
    <property type="match status" value="1"/>
</dbReference>
<dbReference type="PANTHER" id="PTHR11760">
    <property type="entry name" value="30S/40S RIBOSOMAL PROTEIN S3"/>
    <property type="match status" value="1"/>
</dbReference>
<dbReference type="PANTHER" id="PTHR11760:SF19">
    <property type="entry name" value="SMALL RIBOSOMAL SUBUNIT PROTEIN US3C"/>
    <property type="match status" value="1"/>
</dbReference>
<dbReference type="Pfam" id="PF07650">
    <property type="entry name" value="KH_2"/>
    <property type="match status" value="1"/>
</dbReference>
<dbReference type="Pfam" id="PF00189">
    <property type="entry name" value="Ribosomal_S3_C"/>
    <property type="match status" value="1"/>
</dbReference>
<dbReference type="SMART" id="SM00322">
    <property type="entry name" value="KH"/>
    <property type="match status" value="1"/>
</dbReference>
<dbReference type="SUPFAM" id="SSF54814">
    <property type="entry name" value="Prokaryotic type KH domain (KH-domain type II)"/>
    <property type="match status" value="1"/>
</dbReference>
<dbReference type="SUPFAM" id="SSF54821">
    <property type="entry name" value="Ribosomal protein S3 C-terminal domain"/>
    <property type="match status" value="1"/>
</dbReference>
<dbReference type="PROSITE" id="PS50823">
    <property type="entry name" value="KH_TYPE_2"/>
    <property type="match status" value="1"/>
</dbReference>
<dbReference type="PROSITE" id="PS00548">
    <property type="entry name" value="RIBOSOMAL_S3"/>
    <property type="match status" value="1"/>
</dbReference>
<feature type="chain" id="PRO_0000293777" description="Small ribosomal subunit protein uS3">
    <location>
        <begin position="1"/>
        <end position="222"/>
    </location>
</feature>
<feature type="domain" description="KH type-2" evidence="1">
    <location>
        <begin position="39"/>
        <end position="108"/>
    </location>
</feature>
<comment type="function">
    <text evidence="1">Binds the lower part of the 30S subunit head. Binds mRNA in the 70S ribosome, positioning it for translation.</text>
</comment>
<comment type="subunit">
    <text evidence="1">Part of the 30S ribosomal subunit. Forms a tight complex with proteins S10 and S14.</text>
</comment>
<comment type="similarity">
    <text evidence="1">Belongs to the universal ribosomal protein uS3 family.</text>
</comment>
<sequence length="222" mass="24616">MGQKVHPHGLRVGVIKDWDAKWYADKKNFADNLIEDQQIRKFIKKELFSAGIAKIEIERSAKRVKLNIHTAKPGVIIGKGGSGIERLKASLKNIIAEKNVLINIVEVKNAETNAQLMAENIAAQLEKRISFRRAMKQTIQRAMKAGTLGVKTACSGRLGGAEIARTEQYNEGTIPLQTIRADIDYGFAEADTTYGKIGVKVWVYNGEVLPTKKVEKKEEANA</sequence>
<accession>Q0SQF0</accession>
<organism>
    <name type="scientific">Clostridium perfringens (strain SM101 / Type A)</name>
    <dbReference type="NCBI Taxonomy" id="289380"/>
    <lineage>
        <taxon>Bacteria</taxon>
        <taxon>Bacillati</taxon>
        <taxon>Bacillota</taxon>
        <taxon>Clostridia</taxon>
        <taxon>Eubacteriales</taxon>
        <taxon>Clostridiaceae</taxon>
        <taxon>Clostridium</taxon>
    </lineage>
</organism>
<evidence type="ECO:0000255" key="1">
    <source>
        <dbReference type="HAMAP-Rule" id="MF_01309"/>
    </source>
</evidence>
<evidence type="ECO:0000305" key="2"/>
<name>RS3_CLOPS</name>
<reference key="1">
    <citation type="journal article" date="2006" name="Genome Res.">
        <title>Skewed genomic variability in strains of the toxigenic bacterial pathogen, Clostridium perfringens.</title>
        <authorList>
            <person name="Myers G.S.A."/>
            <person name="Rasko D.A."/>
            <person name="Cheung J.K."/>
            <person name="Ravel J."/>
            <person name="Seshadri R."/>
            <person name="DeBoy R.T."/>
            <person name="Ren Q."/>
            <person name="Varga J."/>
            <person name="Awad M.M."/>
            <person name="Brinkac L.M."/>
            <person name="Daugherty S.C."/>
            <person name="Haft D.H."/>
            <person name="Dodson R.J."/>
            <person name="Madupu R."/>
            <person name="Nelson W.C."/>
            <person name="Rosovitz M.J."/>
            <person name="Sullivan S.A."/>
            <person name="Khouri H."/>
            <person name="Dimitrov G.I."/>
            <person name="Watkins K.L."/>
            <person name="Mulligan S."/>
            <person name="Benton J."/>
            <person name="Radune D."/>
            <person name="Fisher D.J."/>
            <person name="Atkins H.S."/>
            <person name="Hiscox T."/>
            <person name="Jost B.H."/>
            <person name="Billington S.J."/>
            <person name="Songer J.G."/>
            <person name="McClane B.A."/>
            <person name="Titball R.W."/>
            <person name="Rood J.I."/>
            <person name="Melville S.B."/>
            <person name="Paulsen I.T."/>
        </authorList>
    </citation>
    <scope>NUCLEOTIDE SEQUENCE [LARGE SCALE GENOMIC DNA]</scope>
    <source>
        <strain>SM101 / Type A</strain>
    </source>
</reference>
<protein>
    <recommendedName>
        <fullName evidence="1">Small ribosomal subunit protein uS3</fullName>
    </recommendedName>
    <alternativeName>
        <fullName evidence="2">30S ribosomal protein S3</fullName>
    </alternativeName>
</protein>
<proteinExistence type="inferred from homology"/>
<keyword id="KW-0687">Ribonucleoprotein</keyword>
<keyword id="KW-0689">Ribosomal protein</keyword>
<keyword id="KW-0694">RNA-binding</keyword>
<keyword id="KW-0699">rRNA-binding</keyword>
<gene>
    <name evidence="1" type="primary">rpsC</name>
    <name type="ordered locus">CPR_2393</name>
</gene>